<dbReference type="EMBL" id="CP003833">
    <property type="protein sequence ID" value="AFR99098.2"/>
    <property type="molecule type" value="Genomic_DNA"/>
</dbReference>
<dbReference type="RefSeq" id="XP_012053691.1">
    <property type="nucleotide sequence ID" value="XM_012198301.1"/>
</dbReference>
<dbReference type="SMR" id="J9VXV2"/>
<dbReference type="GeneID" id="23888965"/>
<dbReference type="KEGG" id="cng:CNAG_05667"/>
<dbReference type="VEuPathDB" id="FungiDB:CNAG_05667"/>
<dbReference type="HOGENOM" id="CLU_001265_30_5_1"/>
<dbReference type="Proteomes" id="UP000010091">
    <property type="component" value="Chromosome 14"/>
</dbReference>
<dbReference type="GO" id="GO:0005886">
    <property type="term" value="C:plasma membrane"/>
    <property type="evidence" value="ECO:0007669"/>
    <property type="project" value="UniProtKB-SubCell"/>
</dbReference>
<dbReference type="GO" id="GO:0005365">
    <property type="term" value="F:myo-inositol transmembrane transporter activity"/>
    <property type="evidence" value="ECO:0000316"/>
    <property type="project" value="UniProtKB"/>
</dbReference>
<dbReference type="GO" id="GO:1904679">
    <property type="term" value="P:myo-inositol import across plasma membrane"/>
    <property type="evidence" value="ECO:0000316"/>
    <property type="project" value="UniProtKB"/>
</dbReference>
<dbReference type="FunFam" id="1.20.1250.20:FF:000073">
    <property type="entry name" value="MFS myo-inositol transporter, putative"/>
    <property type="match status" value="1"/>
</dbReference>
<dbReference type="Gene3D" id="1.20.1250.20">
    <property type="entry name" value="MFS general substrate transporter like domains"/>
    <property type="match status" value="1"/>
</dbReference>
<dbReference type="InterPro" id="IPR020846">
    <property type="entry name" value="MFS_dom"/>
</dbReference>
<dbReference type="InterPro" id="IPR005828">
    <property type="entry name" value="MFS_sugar_transport-like"/>
</dbReference>
<dbReference type="InterPro" id="IPR036259">
    <property type="entry name" value="MFS_trans_sf"/>
</dbReference>
<dbReference type="InterPro" id="IPR050814">
    <property type="entry name" value="Myo-inositol_Transporter"/>
</dbReference>
<dbReference type="InterPro" id="IPR003663">
    <property type="entry name" value="Sugar/inositol_transpt"/>
</dbReference>
<dbReference type="InterPro" id="IPR005829">
    <property type="entry name" value="Sugar_transporter_CS"/>
</dbReference>
<dbReference type="NCBIfam" id="TIGR00879">
    <property type="entry name" value="SP"/>
    <property type="match status" value="1"/>
</dbReference>
<dbReference type="PANTHER" id="PTHR48020">
    <property type="entry name" value="PROTON MYO-INOSITOL COTRANSPORTER"/>
    <property type="match status" value="1"/>
</dbReference>
<dbReference type="PANTHER" id="PTHR48020:SF12">
    <property type="entry name" value="PROTON MYO-INOSITOL COTRANSPORTER"/>
    <property type="match status" value="1"/>
</dbReference>
<dbReference type="Pfam" id="PF00083">
    <property type="entry name" value="Sugar_tr"/>
    <property type="match status" value="1"/>
</dbReference>
<dbReference type="PRINTS" id="PR00171">
    <property type="entry name" value="SUGRTRNSPORT"/>
</dbReference>
<dbReference type="SUPFAM" id="SSF103473">
    <property type="entry name" value="MFS general substrate transporter"/>
    <property type="match status" value="1"/>
</dbReference>
<dbReference type="PROSITE" id="PS50850">
    <property type="entry name" value="MFS"/>
    <property type="match status" value="1"/>
</dbReference>
<dbReference type="PROSITE" id="PS00217">
    <property type="entry name" value="SUGAR_TRANSPORT_2"/>
    <property type="match status" value="1"/>
</dbReference>
<comment type="function">
    <text evidence="3 4">Transporter for myo-inositol.</text>
</comment>
<comment type="catalytic activity">
    <reaction evidence="7 8">
        <text>myo-inositol(out) + H(+)(out) = myo-inositol(in) + H(+)(in)</text>
        <dbReference type="Rhea" id="RHEA:60364"/>
        <dbReference type="ChEBI" id="CHEBI:15378"/>
        <dbReference type="ChEBI" id="CHEBI:17268"/>
    </reaction>
</comment>
<comment type="subcellular location">
    <subcellularLocation>
        <location evidence="1">Cell membrane</location>
        <topology evidence="2">Multi-pass membrane protein</topology>
    </subcellularLocation>
</comment>
<comment type="induction">
    <text evidence="3 4">Induced during sexual reproduction (PubMed:20689743). Expressed during infection (PubMed:21398509).</text>
</comment>
<comment type="similarity">
    <text evidence="6">Belongs to the major facilitator superfamily. Sugar transporter (TC 2.A.1.1) family.</text>
</comment>
<protein>
    <recommendedName>
        <fullName evidence="5">Myo-inositol transporter 3B</fullName>
    </recommendedName>
</protein>
<accession>J9VXV2</accession>
<evidence type="ECO:0000250" key="1">
    <source>
        <dbReference type="UniProtKB" id="P30605"/>
    </source>
</evidence>
<evidence type="ECO:0000255" key="2"/>
<evidence type="ECO:0000269" key="3">
    <source>
    </source>
</evidence>
<evidence type="ECO:0000269" key="4">
    <source>
    </source>
</evidence>
<evidence type="ECO:0000303" key="5">
    <source>
    </source>
</evidence>
<evidence type="ECO:0000305" key="6"/>
<evidence type="ECO:0000305" key="7">
    <source>
    </source>
</evidence>
<evidence type="ECO:0000305" key="8">
    <source>
    </source>
</evidence>
<evidence type="ECO:0000312" key="9">
    <source>
        <dbReference type="EMBL" id="AFR99098.2"/>
    </source>
</evidence>
<evidence type="ECO:0000312" key="10">
    <source>
        <dbReference type="Proteomes" id="UP000010091"/>
    </source>
</evidence>
<keyword id="KW-1003">Cell membrane</keyword>
<keyword id="KW-0472">Membrane</keyword>
<keyword id="KW-0812">Transmembrane</keyword>
<keyword id="KW-1133">Transmembrane helix</keyword>
<keyword id="KW-0813">Transport</keyword>
<gene>
    <name evidence="5" type="primary">ITR3B</name>
    <name evidence="9" type="ORF">CNAG_05667</name>
</gene>
<sequence>MAILISDVFFTIGAVLIASSYSVPQMIVGRIILGIGVGGAAVIAPLFITETAPTAVRGRCIGVNAFFIPFGQVVADAIGAGVQNVHNGWRLLFALGVVPSVLQLLLFHYLPESPRILILKGDTDRARTVFQSIYPTATRDMIDYKFRVAQEYVAATTALQSETTFWERVKKVWKTGSYRRSITTVSVLQAAGQLCGFNTLLYYAGTLFGLLGLSNPALGGLIPAGTNAVFVLIGMSLVDKVGRRGLMLFGVPIMLLGLVWNIIGFYYLCKPTGGFLDTSYSYDTTNVGVVIGGIVFFVVGYGLTYSHLVWYQAEYLALEVRSMGSGVATTVCWIANLVVSVSYLSELETMTPSGTYGFYLGLSVIGFAFVVFCFPETKQLSIDETSLLFENDWGVKRSVQMRKERRETRKRFQDAELAEAATAHLEARQQKSTSVSPAELSKFMAGLKGNKRKPSVLVKTAT</sequence>
<feature type="chain" id="PRO_0000456783" description="Myo-inositol transporter 3B">
    <location>
        <begin position="1"/>
        <end position="462"/>
    </location>
</feature>
<feature type="transmembrane region" description="Helical" evidence="2">
    <location>
        <begin position="1"/>
        <end position="21"/>
    </location>
</feature>
<feature type="transmembrane region" description="Helical" evidence="2">
    <location>
        <begin position="31"/>
        <end position="51"/>
    </location>
</feature>
<feature type="transmembrane region" description="Helical" evidence="2">
    <location>
        <begin position="61"/>
        <end position="81"/>
    </location>
</feature>
<feature type="transmembrane region" description="Helical" evidence="2">
    <location>
        <begin position="91"/>
        <end position="111"/>
    </location>
</feature>
<feature type="transmembrane region" description="Helical" evidence="2">
    <location>
        <begin position="194"/>
        <end position="214"/>
    </location>
</feature>
<feature type="transmembrane region" description="Helical" evidence="2">
    <location>
        <begin position="218"/>
        <end position="238"/>
    </location>
</feature>
<feature type="transmembrane region" description="Helical" evidence="2">
    <location>
        <begin position="245"/>
        <end position="265"/>
    </location>
</feature>
<feature type="transmembrane region" description="Helical" evidence="2">
    <location>
        <begin position="289"/>
        <end position="309"/>
    </location>
</feature>
<feature type="transmembrane region" description="Helical" evidence="2">
    <location>
        <begin position="324"/>
        <end position="344"/>
    </location>
</feature>
<feature type="transmembrane region" description="Helical" evidence="2">
    <location>
        <begin position="354"/>
        <end position="374"/>
    </location>
</feature>
<organism evidence="10">
    <name type="scientific">Cryptococcus neoformans var. grubii serotype A (strain H99 / ATCC 208821 / CBS 10515 / FGSC 9487)</name>
    <name type="common">Filobasidiella neoformans var. grubii</name>
    <dbReference type="NCBI Taxonomy" id="235443"/>
    <lineage>
        <taxon>Eukaryota</taxon>
        <taxon>Fungi</taxon>
        <taxon>Dikarya</taxon>
        <taxon>Basidiomycota</taxon>
        <taxon>Agaricomycotina</taxon>
        <taxon>Tremellomycetes</taxon>
        <taxon>Tremellales</taxon>
        <taxon>Cryptococcaceae</taxon>
        <taxon>Cryptococcus</taxon>
        <taxon>Cryptococcus neoformans species complex</taxon>
    </lineage>
</organism>
<proteinExistence type="evidence at protein level"/>
<reference evidence="10" key="1">
    <citation type="journal article" date="2014" name="PLoS Genet.">
        <title>Analysis of the genome and transcriptome of Cryptococcus neoformans var. grubii reveals complex RNA expression and microevolution leading to virulence attenuation.</title>
        <authorList>
            <person name="Janbon G."/>
            <person name="Ormerod K.L."/>
            <person name="Paulet D."/>
            <person name="Byrnes E.J. III"/>
            <person name="Yadav V."/>
            <person name="Chatterjee G."/>
            <person name="Mullapudi N."/>
            <person name="Hon C.-C."/>
            <person name="Billmyre R.B."/>
            <person name="Brunel F."/>
            <person name="Bahn Y.-S."/>
            <person name="Chen W."/>
            <person name="Chen Y."/>
            <person name="Chow E.W.L."/>
            <person name="Coppee J.-Y."/>
            <person name="Floyd-Averette A."/>
            <person name="Gaillardin C."/>
            <person name="Gerik K.J."/>
            <person name="Goldberg J."/>
            <person name="Gonzalez-Hilarion S."/>
            <person name="Gujja S."/>
            <person name="Hamlin J.L."/>
            <person name="Hsueh Y.-P."/>
            <person name="Ianiri G."/>
            <person name="Jones S."/>
            <person name="Kodira C.D."/>
            <person name="Kozubowski L."/>
            <person name="Lam W."/>
            <person name="Marra M."/>
            <person name="Mesner L.D."/>
            <person name="Mieczkowski P.A."/>
            <person name="Moyrand F."/>
            <person name="Nielsen K."/>
            <person name="Proux C."/>
            <person name="Rossignol T."/>
            <person name="Schein J.E."/>
            <person name="Sun S."/>
            <person name="Wollschlaeger C."/>
            <person name="Wood I.A."/>
            <person name="Zeng Q."/>
            <person name="Neuveglise C."/>
            <person name="Newlon C.S."/>
            <person name="Perfect J.R."/>
            <person name="Lodge J.K."/>
            <person name="Idnurm A."/>
            <person name="Stajich J.E."/>
            <person name="Kronstad J.W."/>
            <person name="Sanyal K."/>
            <person name="Heitman J."/>
            <person name="Fraser J.A."/>
            <person name="Cuomo C.A."/>
            <person name="Dietrich F.S."/>
        </authorList>
    </citation>
    <scope>NUCLEOTIDE SEQUENCE [LARGE SCALE GENOMIC DNA]</scope>
    <source>
        <strain>H99 / ATCC 208821 / CBS 10515 / FGSC 9487</strain>
    </source>
</reference>
<reference evidence="6" key="2">
    <citation type="journal article" date="2010" name="MBio">
        <title>Role of an expanded inositol transporter repertoire in Cryptococcus neoformans sexual reproduction and virulence.</title>
        <authorList>
            <person name="Xue C."/>
            <person name="Liu T."/>
            <person name="Chen L."/>
            <person name="Li W."/>
            <person name="Liu I."/>
            <person name="Kronstad J.W."/>
            <person name="Seyfang A."/>
            <person name="Heitman J."/>
        </authorList>
    </citation>
    <scope>FUNCTION</scope>
    <scope>CATALYTIC ACTIVITY</scope>
    <scope>INDUCTION</scope>
</reference>
<reference evidence="6" key="3">
    <citation type="journal article" date="2011" name="Eukaryot. Cell">
        <title>Two major inositol transporters and their role in cryptococcal virulence.</title>
        <authorList>
            <person name="Wang Y."/>
            <person name="Liu T.B."/>
            <person name="Delmas G."/>
            <person name="Park S."/>
            <person name="Perlin D."/>
            <person name="Xue C."/>
        </authorList>
    </citation>
    <scope>FUNCTION</scope>
    <scope>CATALYTIC ACTIVITY</scope>
    <scope>INDUCTION</scope>
</reference>
<name>ITR3B_CRYNH</name>